<proteinExistence type="evidence at protein level"/>
<organism>
    <name type="scientific">Rhodospirillum rubrum (strain ATCC 11170 / ATH 1.1.1 / DSM 467 / LMG 4362 / NCIMB 8255 / S1)</name>
    <dbReference type="NCBI Taxonomy" id="269796"/>
    <lineage>
        <taxon>Bacteria</taxon>
        <taxon>Pseudomonadati</taxon>
        <taxon>Pseudomonadota</taxon>
        <taxon>Alphaproteobacteria</taxon>
        <taxon>Rhodospirillales</taxon>
        <taxon>Rhodospirillaceae</taxon>
        <taxon>Rhodospirillum</taxon>
    </lineage>
</organism>
<gene>
    <name evidence="1 5" type="primary">mtnP</name>
    <name type="ordered locus">Rru_A0361</name>
</gene>
<reference key="1">
    <citation type="journal article" date="2011" name="Stand. Genomic Sci.">
        <title>Complete genome sequence of Rhodospirillum rubrum type strain (S1).</title>
        <authorList>
            <person name="Munk A.C."/>
            <person name="Copeland A."/>
            <person name="Lucas S."/>
            <person name="Lapidus A."/>
            <person name="Del Rio T.G."/>
            <person name="Barry K."/>
            <person name="Detter J.C."/>
            <person name="Hammon N."/>
            <person name="Israni S."/>
            <person name="Pitluck S."/>
            <person name="Brettin T."/>
            <person name="Bruce D."/>
            <person name="Han C."/>
            <person name="Tapia R."/>
            <person name="Gilna P."/>
            <person name="Schmutz J."/>
            <person name="Larimer F."/>
            <person name="Land M."/>
            <person name="Kyrpides N.C."/>
            <person name="Mavromatis K."/>
            <person name="Richardson P."/>
            <person name="Rohde M."/>
            <person name="Goeker M."/>
            <person name="Klenk H.P."/>
            <person name="Zhang Y."/>
            <person name="Roberts G.P."/>
            <person name="Reslewic S."/>
            <person name="Schwartz D.C."/>
        </authorList>
    </citation>
    <scope>NUCLEOTIDE SEQUENCE [LARGE SCALE GENOMIC DNA]</scope>
    <source>
        <strain>ATCC 11170 / ATH 1.1.1 / DSM 467 / LMG 4362 / NCIMB 8255 / S1</strain>
    </source>
</reference>
<reference key="2">
    <citation type="journal article" date="2012" name="Nat. Chem. Biol.">
        <title>A RubisCO-like protein links SAM metabolism with isoprenoid biosynthesis.</title>
        <authorList>
            <person name="Erb T.J."/>
            <person name="Evans B.S."/>
            <person name="Cho K."/>
            <person name="Warlick B.P."/>
            <person name="Sriram J."/>
            <person name="Wood B.M."/>
            <person name="Imker H.J."/>
            <person name="Sweedler J.V."/>
            <person name="Tabita F.R."/>
            <person name="Gerlt J.A."/>
        </authorList>
    </citation>
    <scope>FUNCTION</scope>
    <scope>CATALYTIC ACTIVITY</scope>
    <scope>BIOPHYSICOCHEMICAL PROPERTIES</scope>
    <scope>DISRUPTION PHENOTYPE</scope>
    <source>
        <strain>ATCC 11170 / ATH 1.1.1 / DSM 467 / LMG 4362 / NCIMB 8255 / S1</strain>
    </source>
</reference>
<reference key="3">
    <citation type="journal article" date="2020" name="Mol. Microbiol.">
        <title>A bifunctional salvage pathway for two distinct S-adenosylmethionine by-products that is widespread in bacteria, including pathogenic Escherichia coli.</title>
        <authorList>
            <person name="North J.A."/>
            <person name="Wildenthal J.A."/>
            <person name="Erb T.J."/>
            <person name="Evans B.S."/>
            <person name="Byerly K.M."/>
            <person name="Gerlt J.A."/>
            <person name="Tabita F.R."/>
        </authorList>
    </citation>
    <scope>FUNCTION</scope>
    <scope>CATALYTIC ACTIVITY</scope>
    <scope>BIOPHYSICOCHEMICAL PROPERTIES</scope>
    <scope>DISRUPTION PHENOTYPE</scope>
</reference>
<dbReference type="EC" id="2.4.2.28" evidence="1 2 3"/>
<dbReference type="EMBL" id="CP000230">
    <property type="protein sequence ID" value="ABC21166.1"/>
    <property type="molecule type" value="Genomic_DNA"/>
</dbReference>
<dbReference type="RefSeq" id="WP_011388114.1">
    <property type="nucleotide sequence ID" value="NC_007643.1"/>
</dbReference>
<dbReference type="RefSeq" id="YP_425453.1">
    <property type="nucleotide sequence ID" value="NC_007643.1"/>
</dbReference>
<dbReference type="SMR" id="Q2RXH9"/>
<dbReference type="STRING" id="269796.Rru_A0361"/>
<dbReference type="EnsemblBacteria" id="ABC21166">
    <property type="protein sequence ID" value="ABC21166"/>
    <property type="gene ID" value="Rru_A0361"/>
</dbReference>
<dbReference type="KEGG" id="rru:Rru_A0361"/>
<dbReference type="PATRIC" id="fig|269796.9.peg.417"/>
<dbReference type="eggNOG" id="COG0005">
    <property type="taxonomic scope" value="Bacteria"/>
</dbReference>
<dbReference type="HOGENOM" id="CLU_054456_0_1_5"/>
<dbReference type="PhylomeDB" id="Q2RXH9"/>
<dbReference type="BioCyc" id="MetaCyc:MONOMER-17874"/>
<dbReference type="UniPathway" id="UPA00904">
    <property type="reaction ID" value="UER00873"/>
</dbReference>
<dbReference type="Proteomes" id="UP000001929">
    <property type="component" value="Chromosome"/>
</dbReference>
<dbReference type="GO" id="GO:0005829">
    <property type="term" value="C:cytosol"/>
    <property type="evidence" value="ECO:0007669"/>
    <property type="project" value="TreeGrafter"/>
</dbReference>
<dbReference type="GO" id="GO:0017061">
    <property type="term" value="F:S-methyl-5-thioadenosine phosphorylase activity"/>
    <property type="evidence" value="ECO:0007669"/>
    <property type="project" value="UniProtKB-UniRule"/>
</dbReference>
<dbReference type="GO" id="GO:0019509">
    <property type="term" value="P:L-methionine salvage from methylthioadenosine"/>
    <property type="evidence" value="ECO:0007669"/>
    <property type="project" value="UniProtKB-UniRule"/>
</dbReference>
<dbReference type="GO" id="GO:0006166">
    <property type="term" value="P:purine ribonucleoside salvage"/>
    <property type="evidence" value="ECO:0007669"/>
    <property type="project" value="UniProtKB-KW"/>
</dbReference>
<dbReference type="CDD" id="cd09010">
    <property type="entry name" value="MTAP_SsMTAPII_like_MTIP"/>
    <property type="match status" value="1"/>
</dbReference>
<dbReference type="FunFam" id="3.40.50.1580:FF:000012">
    <property type="entry name" value="Probable 6-oxopurine nucleoside phosphorylase"/>
    <property type="match status" value="1"/>
</dbReference>
<dbReference type="Gene3D" id="3.40.50.1580">
    <property type="entry name" value="Nucleoside phosphorylase domain"/>
    <property type="match status" value="1"/>
</dbReference>
<dbReference type="HAMAP" id="MF_01963">
    <property type="entry name" value="MTAP"/>
    <property type="match status" value="1"/>
</dbReference>
<dbReference type="InterPro" id="IPR010044">
    <property type="entry name" value="MTAP"/>
</dbReference>
<dbReference type="InterPro" id="IPR000845">
    <property type="entry name" value="Nucleoside_phosphorylase_d"/>
</dbReference>
<dbReference type="InterPro" id="IPR035994">
    <property type="entry name" value="Nucleoside_phosphorylase_sf"/>
</dbReference>
<dbReference type="InterPro" id="IPR018099">
    <property type="entry name" value="Purine_phosphorylase-2_CS"/>
</dbReference>
<dbReference type="NCBIfam" id="TIGR01694">
    <property type="entry name" value="MTAP"/>
    <property type="match status" value="1"/>
</dbReference>
<dbReference type="NCBIfam" id="NF006492">
    <property type="entry name" value="PRK08931.1"/>
    <property type="match status" value="1"/>
</dbReference>
<dbReference type="PANTHER" id="PTHR42679">
    <property type="entry name" value="S-METHYL-5'-THIOADENOSINE PHOSPHORYLASE"/>
    <property type="match status" value="1"/>
</dbReference>
<dbReference type="PANTHER" id="PTHR42679:SF2">
    <property type="entry name" value="S-METHYL-5'-THIOADENOSINE PHOSPHORYLASE"/>
    <property type="match status" value="1"/>
</dbReference>
<dbReference type="Pfam" id="PF01048">
    <property type="entry name" value="PNP_UDP_1"/>
    <property type="match status" value="1"/>
</dbReference>
<dbReference type="SUPFAM" id="SSF53167">
    <property type="entry name" value="Purine and uridine phosphorylases"/>
    <property type="match status" value="1"/>
</dbReference>
<dbReference type="PROSITE" id="PS01240">
    <property type="entry name" value="PNP_MTAP_2"/>
    <property type="match status" value="1"/>
</dbReference>
<accession>Q2RXH9</accession>
<sequence length="294" mass="32078">MSEAYRQPVLGVIGGSGVYDIDGLEGARWQTVESPFGDVSDQILRGTLDGLEMAFLPRHGRGHVLAPSDVNYRANIDALKRAGVTEILSVSAVGSLAEDLPPGTFVIADQFIDRTFAREKSFFGKGLVAHVSMAHPVSAWLGDRVEEVLADLAIPHRRGGTYLCMEGPQFSTLAESNLYRQWGCHVIGMTNMPEAKLAREAEIAYCTVAMVTDFDCWHPDHDHVSVEAVVRVLLQNADKARSLVKAMPAKLKDRPYPLPDGSHRSLDNAIITHPDRRNPGMARKLSAVAGRVLG</sequence>
<keyword id="KW-0328">Glycosyltransferase</keyword>
<keyword id="KW-0660">Purine salvage</keyword>
<keyword id="KW-1185">Reference proteome</keyword>
<keyword id="KW-0808">Transferase</keyword>
<name>MTAP_RHORT</name>
<comment type="function">
    <text evidence="1 2 3">Catalyzes the reversible phosphorylation of S-methyl-5'-thioadenosine (MTA) to adenine and 5-methylthioribose-1-phosphate (PubMed:23042035, PubMed:31950558). Involved in the breakdown of MTA, a major by-product of polyamine biosynthesis. Responsible for the first step in the methionine salvage pathway after MTA has been generated from S-adenosylmethionine. Has broad substrate specificity with 6-aminopurine nucleosides as preferred substrates (By similarity). Also catalyzes the phosphorylation of 5'-deoxyadenosine (5'dAdo) to 5-deoxyribose 1-phosphate (PubMed:31950558). Part of a bifunctional DHAP-shunt salvage pathway for SAM by-products (PubMed:31950558).</text>
</comment>
<comment type="catalytic activity">
    <reaction evidence="1 2 3">
        <text>S-methyl-5'-thioadenosine + phosphate = 5-(methylsulfanyl)-alpha-D-ribose 1-phosphate + adenine</text>
        <dbReference type="Rhea" id="RHEA:11852"/>
        <dbReference type="ChEBI" id="CHEBI:16708"/>
        <dbReference type="ChEBI" id="CHEBI:17509"/>
        <dbReference type="ChEBI" id="CHEBI:43474"/>
        <dbReference type="ChEBI" id="CHEBI:58533"/>
        <dbReference type="EC" id="2.4.2.28"/>
    </reaction>
    <physiologicalReaction direction="left-to-right" evidence="3">
        <dbReference type="Rhea" id="RHEA:11853"/>
    </physiologicalReaction>
</comment>
<comment type="catalytic activity">
    <reaction evidence="3">
        <text>5'-deoxyadenosine + phosphate = 5-deoxy-alpha-D-ribose 1-phosphate + adenine</text>
        <dbReference type="Rhea" id="RHEA:24869"/>
        <dbReference type="ChEBI" id="CHEBI:16708"/>
        <dbReference type="ChEBI" id="CHEBI:17319"/>
        <dbReference type="ChEBI" id="CHEBI:43474"/>
        <dbReference type="ChEBI" id="CHEBI:58749"/>
        <dbReference type="EC" id="2.4.2.28"/>
    </reaction>
    <physiologicalReaction direction="left-to-right" evidence="3">
        <dbReference type="Rhea" id="RHEA:24870"/>
    </physiologicalReaction>
</comment>
<comment type="biophysicochemical properties">
    <kinetics>
        <KM evidence="2">14 uM for 5'-methylthioadenosine</KM>
        <KM evidence="2">40 uM for 5'-deoxyadenosine</KM>
        <KM evidence="3">41 uM for adenine</KM>
        <text evidence="2 3">kcat is 4.5 sec(-1) with 5'-methylthioadenosine as substrate. kcat is 6.7 sec(-1) with 5'-deoxyadenosine as substrate (PubMed:23042035). kcat is 0.06 sec(-1) with adenine as substrate (PubMed:31950558).</text>
    </kinetics>
</comment>
<comment type="pathway">
    <text evidence="1">Amino-acid biosynthesis; L-methionine biosynthesis via salvage pathway; S-methyl-5-thio-alpha-D-ribose 1-phosphate from S-methyl-5'-thioadenosine (phosphorylase route): step 1/1.</text>
</comment>
<comment type="subunit">
    <text evidence="1">Homohexamer. Dimer of a homotrimer.</text>
</comment>
<comment type="disruption phenotype">
    <text evidence="2 3">Mutant cannot release methanethiol upon 5'-methylthioadenosine (MTA) feeding (PubMed:23042035). Deletion mutant accumulates both MTA and 5'-deoxyadenosine extracellularly (PubMed:31950558).</text>
</comment>
<comment type="similarity">
    <text evidence="1">Belongs to the PNP/MTAP phosphorylase family. MTAP subfamily.</text>
</comment>
<protein>
    <recommendedName>
        <fullName evidence="1">S-methyl-5'-thioadenosine phosphorylase</fullName>
        <ecNumber evidence="1 2 3">2.4.2.28</ecNumber>
    </recommendedName>
    <alternativeName>
        <fullName evidence="1">5'-methylthioadenosine phosphorylase</fullName>
        <shortName evidence="1 4">MTA phosphorylase</shortName>
        <shortName evidence="1">MTAP</shortName>
    </alternativeName>
</protein>
<evidence type="ECO:0000255" key="1">
    <source>
        <dbReference type="HAMAP-Rule" id="MF_01963"/>
    </source>
</evidence>
<evidence type="ECO:0000269" key="2">
    <source>
    </source>
</evidence>
<evidence type="ECO:0000269" key="3">
    <source>
    </source>
</evidence>
<evidence type="ECO:0000303" key="4">
    <source>
    </source>
</evidence>
<evidence type="ECO:0000303" key="5">
    <source>
    </source>
</evidence>
<feature type="chain" id="PRO_0000415099" description="S-methyl-5'-thioadenosine phosphorylase">
    <location>
        <begin position="1"/>
        <end position="294"/>
    </location>
</feature>
<feature type="binding site" evidence="1">
    <location>
        <position position="16"/>
    </location>
    <ligand>
        <name>phosphate</name>
        <dbReference type="ChEBI" id="CHEBI:43474"/>
    </ligand>
</feature>
<feature type="binding site" evidence="1">
    <location>
        <begin position="58"/>
        <end position="59"/>
    </location>
    <ligand>
        <name>phosphate</name>
        <dbReference type="ChEBI" id="CHEBI:43474"/>
    </ligand>
</feature>
<feature type="binding site" evidence="1">
    <location>
        <begin position="91"/>
        <end position="92"/>
    </location>
    <ligand>
        <name>phosphate</name>
        <dbReference type="ChEBI" id="CHEBI:43474"/>
    </ligand>
</feature>
<feature type="binding site" evidence="1">
    <location>
        <position position="189"/>
    </location>
    <ligand>
        <name>substrate</name>
    </ligand>
</feature>
<feature type="binding site" evidence="1">
    <location>
        <position position="190"/>
    </location>
    <ligand>
        <name>phosphate</name>
        <dbReference type="ChEBI" id="CHEBI:43474"/>
    </ligand>
</feature>
<feature type="binding site" evidence="1">
    <location>
        <begin position="213"/>
        <end position="215"/>
    </location>
    <ligand>
        <name>substrate</name>
    </ligand>
</feature>
<feature type="site" description="Important for substrate specificity" evidence="1">
    <location>
        <position position="171"/>
    </location>
</feature>
<feature type="site" description="Important for substrate specificity" evidence="1">
    <location>
        <position position="226"/>
    </location>
</feature>